<protein>
    <recommendedName>
        <fullName>Lectin-D2</fullName>
    </recommendedName>
    <alternativeName>
        <fullName>PL-D2</fullName>
    </alternativeName>
</protein>
<evidence type="ECO:0000255" key="1">
    <source>
        <dbReference type="PROSITE-ProRule" id="PRU00261"/>
    </source>
</evidence>
<evidence type="ECO:0000269" key="2">
    <source>
    </source>
</evidence>
<evidence type="ECO:0000269" key="3">
    <source>
    </source>
</evidence>
<evidence type="ECO:0000269" key="4">
    <source>
    </source>
</evidence>
<evidence type="ECO:0000269" key="5">
    <source>
    </source>
</evidence>
<evidence type="ECO:0000305" key="6"/>
<evidence type="ECO:0000312" key="7">
    <source>
        <dbReference type="PDB" id="1ULM"/>
    </source>
</evidence>
<evidence type="ECO:0007829" key="8">
    <source>
        <dbReference type="PDB" id="1UHA"/>
    </source>
</evidence>
<evidence type="ECO:0007829" key="9">
    <source>
        <dbReference type="PDB" id="1ULM"/>
    </source>
</evidence>
<reference evidence="6" key="1">
    <citation type="journal article" date="1996" name="Biosci. Biotechnol. Biochem.">
        <title>Amino acid sequence and some properties of lectin-D from the roots of pokeweed (Phytolacca americana).</title>
        <authorList>
            <person name="Yamaguchi K."/>
            <person name="Mori A."/>
            <person name="Funatsu G."/>
        </authorList>
    </citation>
    <scope>PROTEIN SEQUENCE</scope>
    <scope>FUNCTION</scope>
    <source>
        <tissue evidence="5">Root</tissue>
    </source>
</reference>
<reference evidence="6" key="2">
    <citation type="journal article" date="2004" name="Biosci. Biotechnol. Biochem.">
        <title>Mitogenic properties of pokeweed lectin-D isoforms on human peripheral blood lymphocytes: non-mitogen PL-D1 and mitogen PL-D2.</title>
        <authorList>
            <person name="Yamaguchi K."/>
            <person name="Uechi M."/>
            <person name="Katakura Y."/>
            <person name="Oda T."/>
            <person name="Ishiguro M."/>
        </authorList>
    </citation>
    <scope>FUNCTION</scope>
    <scope>SUBUNIT</scope>
</reference>
<reference evidence="6 7" key="3">
    <citation type="journal article" date="2003" name="J. Mol. Biol.">
        <title>Similarity between protein-protein and protein-carbohydrate interactions, revealed by two crystal structures of lectins from the roots of pokeweed.</title>
        <authorList>
            <person name="Hayashida M."/>
            <person name="Fujii T."/>
            <person name="Hamasu M."/>
            <person name="Ishiguro M."/>
            <person name="Hata Y."/>
        </authorList>
    </citation>
    <scope>X-RAY CRYSTALLOGRAPHY (1.8 ANGSTROMS) IN COMPLEX WITH TRI-N-ACETYLCHITOTRIOSE</scope>
</reference>
<reference evidence="6" key="4">
    <citation type="journal article" date="2004" name="Acta Crystallogr. D">
        <title>Structures of two lectins from the roots of pokeweed (Phytolacca americana).</title>
        <authorList>
            <person name="Fujii T."/>
            <person name="Hayashida M."/>
            <person name="Hamasu M."/>
            <person name="Ishiguro M."/>
            <person name="Hata Y."/>
        </authorList>
    </citation>
    <scope>X-RAY CRYSTALLOGRAPHY (1.5 ANGSTROMS)</scope>
</reference>
<accession>P83790</accession>
<proteinExistence type="evidence at protein level"/>
<name>LED2_PHYAM</name>
<feature type="chain" id="PRO_0000124812" description="Lectin-D2">
    <location>
        <begin position="1"/>
        <end position="82"/>
    </location>
</feature>
<feature type="domain" description="Chitin-binding type-1 1" evidence="1">
    <location>
        <begin position="1"/>
        <end position="42"/>
    </location>
</feature>
<feature type="domain" description="Chitin-binding type-1 2" evidence="1">
    <location>
        <begin position="43"/>
        <end position="82"/>
    </location>
</feature>
<feature type="binding site" evidence="2">
    <location>
        <position position="20"/>
    </location>
    <ligand>
        <name>a carbohydrate</name>
        <dbReference type="ChEBI" id="CHEBI:16646"/>
    </ligand>
</feature>
<feature type="binding site" evidence="2">
    <location>
        <position position="22"/>
    </location>
    <ligand>
        <name>a carbohydrate</name>
        <dbReference type="ChEBI" id="CHEBI:16646"/>
    </ligand>
</feature>
<feature type="binding site" evidence="2">
    <location>
        <position position="24"/>
    </location>
    <ligand>
        <name>a carbohydrate</name>
        <dbReference type="ChEBI" id="CHEBI:16646"/>
    </ligand>
</feature>
<feature type="binding site" evidence="2">
    <location>
        <position position="31"/>
    </location>
    <ligand>
        <name>a carbohydrate</name>
        <dbReference type="ChEBI" id="CHEBI:16646"/>
    </ligand>
</feature>
<feature type="binding site" evidence="2">
    <location>
        <position position="43"/>
    </location>
    <ligand>
        <name>a carbohydrate</name>
        <dbReference type="ChEBI" id="CHEBI:16646"/>
    </ligand>
</feature>
<feature type="binding site" evidence="2">
    <location>
        <position position="61"/>
    </location>
    <ligand>
        <name>a carbohydrate</name>
        <dbReference type="ChEBI" id="CHEBI:16646"/>
    </ligand>
</feature>
<feature type="binding site" evidence="2">
    <location>
        <position position="63"/>
    </location>
    <ligand>
        <name>a carbohydrate</name>
        <dbReference type="ChEBI" id="CHEBI:16646"/>
    </ligand>
</feature>
<feature type="binding site" evidence="2">
    <location>
        <position position="65"/>
    </location>
    <ligand>
        <name>a carbohydrate</name>
        <dbReference type="ChEBI" id="CHEBI:16646"/>
    </ligand>
</feature>
<feature type="binding site" evidence="2">
    <location>
        <position position="72"/>
    </location>
    <ligand>
        <name>a carbohydrate</name>
        <dbReference type="ChEBI" id="CHEBI:16646"/>
    </ligand>
</feature>
<feature type="disulfide bond" evidence="1 2 3">
    <location>
        <begin position="4"/>
        <end position="19"/>
    </location>
</feature>
<feature type="disulfide bond" evidence="1 2 3">
    <location>
        <begin position="13"/>
        <end position="25"/>
    </location>
</feature>
<feature type="disulfide bond" evidence="1 2 3">
    <location>
        <begin position="18"/>
        <end position="32"/>
    </location>
</feature>
<feature type="disulfide bond" evidence="1 2 3">
    <location>
        <begin position="36"/>
        <end position="40"/>
    </location>
</feature>
<feature type="disulfide bond" evidence="1 2 3">
    <location>
        <begin position="45"/>
        <end position="60"/>
    </location>
</feature>
<feature type="disulfide bond" evidence="1 2 3">
    <location>
        <begin position="54"/>
        <end position="66"/>
    </location>
</feature>
<feature type="disulfide bond" evidence="1 2 3">
    <location>
        <begin position="59"/>
        <end position="73"/>
    </location>
</feature>
<feature type="disulfide bond" evidence="1 2 3">
    <location>
        <begin position="77"/>
        <end position="81"/>
    </location>
</feature>
<feature type="helix" evidence="8">
    <location>
        <begin position="6"/>
        <end position="8"/>
    </location>
</feature>
<feature type="helix" evidence="8">
    <location>
        <begin position="14"/>
        <end position="16"/>
    </location>
</feature>
<feature type="strand" evidence="8">
    <location>
        <begin position="25"/>
        <end position="28"/>
    </location>
</feature>
<feature type="helix" evidence="8">
    <location>
        <begin position="29"/>
        <end position="32"/>
    </location>
</feature>
<feature type="turn" evidence="8">
    <location>
        <begin position="40"/>
        <end position="43"/>
    </location>
</feature>
<feature type="helix" evidence="8">
    <location>
        <begin position="47"/>
        <end position="49"/>
    </location>
</feature>
<feature type="strand" evidence="8">
    <location>
        <begin position="64"/>
        <end position="67"/>
    </location>
</feature>
<feature type="helix" evidence="8">
    <location>
        <begin position="70"/>
        <end position="73"/>
    </location>
</feature>
<feature type="strand" evidence="9">
    <location>
        <begin position="74"/>
        <end position="76"/>
    </location>
</feature>
<dbReference type="PDB" id="1UHA">
    <property type="method" value="X-ray"/>
    <property type="resolution" value="1.50 A"/>
    <property type="chains" value="A=1-82"/>
</dbReference>
<dbReference type="PDB" id="1ULM">
    <property type="method" value="X-ray"/>
    <property type="resolution" value="1.80 A"/>
    <property type="chains" value="A/B=1-82"/>
</dbReference>
<dbReference type="PDB" id="1ULN">
    <property type="method" value="X-ray"/>
    <property type="resolution" value="1.65 A"/>
    <property type="chains" value="A=1-82"/>
</dbReference>
<dbReference type="PDBsum" id="1UHA"/>
<dbReference type="PDBsum" id="1ULM"/>
<dbReference type="PDBsum" id="1ULN"/>
<dbReference type="SMR" id="P83790"/>
<dbReference type="CAZy" id="CBM18">
    <property type="family name" value="Carbohydrate-Binding Module Family 18"/>
</dbReference>
<dbReference type="UniLectin" id="P83790"/>
<dbReference type="EvolutionaryTrace" id="P83790"/>
<dbReference type="GO" id="GO:0030246">
    <property type="term" value="F:carbohydrate binding"/>
    <property type="evidence" value="ECO:0007669"/>
    <property type="project" value="UniProtKB-KW"/>
</dbReference>
<dbReference type="GO" id="GO:0008061">
    <property type="term" value="F:chitin binding"/>
    <property type="evidence" value="ECO:0000314"/>
    <property type="project" value="UniProtKB"/>
</dbReference>
<dbReference type="GO" id="GO:0051781">
    <property type="term" value="P:positive regulation of cell division"/>
    <property type="evidence" value="ECO:0007669"/>
    <property type="project" value="UniProtKB-KW"/>
</dbReference>
<dbReference type="GO" id="GO:0045840">
    <property type="term" value="P:positive regulation of mitotic nuclear division"/>
    <property type="evidence" value="ECO:0000314"/>
    <property type="project" value="UniProtKB"/>
</dbReference>
<dbReference type="CDD" id="cd00035">
    <property type="entry name" value="ChtBD1"/>
    <property type="match status" value="2"/>
</dbReference>
<dbReference type="FunFam" id="3.30.60.10:FF:000001">
    <property type="entry name" value="Basic endochitinase"/>
    <property type="match status" value="2"/>
</dbReference>
<dbReference type="Gene3D" id="3.30.60.10">
    <property type="entry name" value="Endochitinase-like"/>
    <property type="match status" value="2"/>
</dbReference>
<dbReference type="InterPro" id="IPR001002">
    <property type="entry name" value="Chitin-bd_1"/>
</dbReference>
<dbReference type="InterPro" id="IPR018371">
    <property type="entry name" value="Chitin-binding_1_CS"/>
</dbReference>
<dbReference type="InterPro" id="IPR036861">
    <property type="entry name" value="Endochitinase-like_sf"/>
</dbReference>
<dbReference type="PANTHER" id="PTHR47849">
    <property type="entry name" value="CHITIN-BINDING LECTIN 1"/>
    <property type="match status" value="1"/>
</dbReference>
<dbReference type="Pfam" id="PF00187">
    <property type="entry name" value="Chitin_bind_1"/>
    <property type="match status" value="2"/>
</dbReference>
<dbReference type="PRINTS" id="PR00451">
    <property type="entry name" value="CHITINBINDNG"/>
</dbReference>
<dbReference type="SMART" id="SM00270">
    <property type="entry name" value="ChtBD1"/>
    <property type="match status" value="2"/>
</dbReference>
<dbReference type="SUPFAM" id="SSF57016">
    <property type="entry name" value="Plant lectins/antimicrobial peptides"/>
    <property type="match status" value="2"/>
</dbReference>
<dbReference type="PROSITE" id="PS00026">
    <property type="entry name" value="CHIT_BIND_I_1"/>
    <property type="match status" value="1"/>
</dbReference>
<dbReference type="PROSITE" id="PS50941">
    <property type="entry name" value="CHIT_BIND_I_2"/>
    <property type="match status" value="2"/>
</dbReference>
<sequence length="82" mass="9103">APECGERASGKRCPNGKCCSQWGYCGTTDNYCGQGCQSQCDYWRCGRDFGGRLCEEDMCCSKYGWCGYSDDHCEDGCQSQCD</sequence>
<keyword id="KW-0002">3D-structure</keyword>
<keyword id="KW-0147">Chitin-binding</keyword>
<keyword id="KW-0903">Direct protein sequencing</keyword>
<keyword id="KW-1015">Disulfide bond</keyword>
<keyword id="KW-0430">Lectin</keyword>
<keyword id="KW-0497">Mitogen</keyword>
<keyword id="KW-0677">Repeat</keyword>
<organism>
    <name type="scientific">Phytolacca americana</name>
    <name type="common">American pokeweed</name>
    <name type="synonym">Phytolacca decandra</name>
    <dbReference type="NCBI Taxonomy" id="3527"/>
    <lineage>
        <taxon>Eukaryota</taxon>
        <taxon>Viridiplantae</taxon>
        <taxon>Streptophyta</taxon>
        <taxon>Embryophyta</taxon>
        <taxon>Tracheophyta</taxon>
        <taxon>Spermatophyta</taxon>
        <taxon>Magnoliopsida</taxon>
        <taxon>eudicotyledons</taxon>
        <taxon>Gunneridae</taxon>
        <taxon>Pentapetalae</taxon>
        <taxon>Caryophyllales</taxon>
        <taxon>Phytolaccaceae</taxon>
        <taxon>Phytolacca</taxon>
    </lineage>
</organism>
<comment type="function">
    <text evidence="2 4 5">N-acetyl-D-glucosamine binding lectin. Shows no hemagglutinating activity towards rabbit erythrocytes and weak activity towards trypsin-treated erythrocytes. Has mitogenic activity towards human peripheral blood lymphocytes (HPBL).</text>
</comment>
<comment type="subunit">
    <text evidence="2 4">Monomer.</text>
</comment>